<dbReference type="EC" id="3.2.1.166"/>
<dbReference type="EMBL" id="AF281160">
    <property type="protein sequence ID" value="AAF87301.2"/>
    <property type="molecule type" value="mRNA"/>
</dbReference>
<dbReference type="RefSeq" id="NP_776507.1">
    <property type="nucleotide sequence ID" value="NM_174082.2"/>
</dbReference>
<dbReference type="SMR" id="Q9MYY0"/>
<dbReference type="FunCoup" id="Q9MYY0">
    <property type="interactions" value="61"/>
</dbReference>
<dbReference type="STRING" id="9913.ENSBTAP00000007550"/>
<dbReference type="CAZy" id="GH79">
    <property type="family name" value="Glycoside Hydrolase Family 79"/>
</dbReference>
<dbReference type="GlyCosmos" id="Q9MYY0">
    <property type="glycosylation" value="3 sites, No reported glycans"/>
</dbReference>
<dbReference type="GlyGen" id="Q9MYY0">
    <property type="glycosylation" value="3 sites"/>
</dbReference>
<dbReference type="PaxDb" id="9913-ENSBTAP00000007550"/>
<dbReference type="GeneID" id="281230"/>
<dbReference type="KEGG" id="bta:281230"/>
<dbReference type="CTD" id="10855"/>
<dbReference type="eggNOG" id="ENOG502QQST">
    <property type="taxonomic scope" value="Eukaryota"/>
</dbReference>
<dbReference type="InParanoid" id="Q9MYY0"/>
<dbReference type="OrthoDB" id="726732at2759"/>
<dbReference type="Proteomes" id="UP000009136">
    <property type="component" value="Unplaced"/>
</dbReference>
<dbReference type="GO" id="GO:0031012">
    <property type="term" value="C:extracellular matrix"/>
    <property type="evidence" value="ECO:0000318"/>
    <property type="project" value="GO_Central"/>
</dbReference>
<dbReference type="GO" id="GO:0005615">
    <property type="term" value="C:extracellular space"/>
    <property type="evidence" value="ECO:0000318"/>
    <property type="project" value="GO_Central"/>
</dbReference>
<dbReference type="GO" id="GO:0005765">
    <property type="term" value="C:lysosomal membrane"/>
    <property type="evidence" value="ECO:0007669"/>
    <property type="project" value="UniProtKB-SubCell"/>
</dbReference>
<dbReference type="GO" id="GO:0005634">
    <property type="term" value="C:nucleus"/>
    <property type="evidence" value="ECO:0007669"/>
    <property type="project" value="UniProtKB-SubCell"/>
</dbReference>
<dbReference type="GO" id="GO:0030305">
    <property type="term" value="F:heparanase activity"/>
    <property type="evidence" value="ECO:0000250"/>
    <property type="project" value="UniProtKB"/>
</dbReference>
<dbReference type="GO" id="GO:0060055">
    <property type="term" value="P:angiogenesis involved in wound healing"/>
    <property type="evidence" value="ECO:0000318"/>
    <property type="project" value="GO_Central"/>
</dbReference>
<dbReference type="GO" id="GO:0007160">
    <property type="term" value="P:cell-matrix adhesion"/>
    <property type="evidence" value="ECO:0000318"/>
    <property type="project" value="GO_Central"/>
</dbReference>
<dbReference type="GO" id="GO:0030200">
    <property type="term" value="P:heparan sulfate proteoglycan catabolic process"/>
    <property type="evidence" value="ECO:0000250"/>
    <property type="project" value="UniProtKB"/>
</dbReference>
<dbReference type="Gene3D" id="3.20.20.80">
    <property type="entry name" value="Glycosidases"/>
    <property type="match status" value="1"/>
</dbReference>
<dbReference type="InterPro" id="IPR005199">
    <property type="entry name" value="Glyco_hydro_79"/>
</dbReference>
<dbReference type="InterPro" id="IPR017853">
    <property type="entry name" value="Glycoside_hydrolase_SF"/>
</dbReference>
<dbReference type="PANTHER" id="PTHR46145">
    <property type="entry name" value="HEPARANASE"/>
    <property type="match status" value="1"/>
</dbReference>
<dbReference type="PANTHER" id="PTHR46145:SF3">
    <property type="entry name" value="HEPARANASE"/>
    <property type="match status" value="1"/>
</dbReference>
<dbReference type="Pfam" id="PF03662">
    <property type="entry name" value="Glyco_hydro_79n"/>
    <property type="match status" value="1"/>
</dbReference>
<dbReference type="SUPFAM" id="SSF51445">
    <property type="entry name" value="(Trans)glycosidases"/>
    <property type="match status" value="1"/>
</dbReference>
<sequence length="545" mass="61077">MLACRKPGLRPPLLLLLPLLGPLGPCSPGTPAAAAPADDAAELEFFTERPLHLVSPAFLSFTIDANLATDPRFFTFLGSSKLRTLARGLAPAYLRFGGNKGDFLIFDPKKEPAFEERSYWLSQSNQDICKSGSIPSDVEEKLRLEWPFQEQVLLREQYQKKFTNSTYSRSSVDMLYTFASCSGLNLIFGVNALLRTTDMHWDSSNAQLLLDYCSSKNYNISWELGNEPNSFQRKAGIFINGRQLGEDFIEFRKLLGKSAFKNAKLYGPDIGQPRRNTVKMLKSFLKAGGEVIDSVTWHHYYVNGRIATKEDFLNPDILDTFISSVQKTLRIVEKIRPLKKVWLGETSSAFGGGAPFLSNTFAAGFMWLDKLGLSARMGIEVVMRQVLFGAGNYHLVDGNFEPLPDYWLSLLFKKLVGNKVLMASVKGPDRSKFRVYLHCTNTKHPRYKEGDLTLYALNLHNVTKHLELPHHLFNKQVDKYLIKPSGTDGLLSKSVQLNGQILKMVDEQTLPALTEKPLHPGSSLGMPPFSYGFFVIRNAKVAACI</sequence>
<reference key="1">
    <citation type="journal article" date="2001" name="Reproduction">
        <title>Expression of heparanase mRNA in bovine placenta during gestation.</title>
        <authorList>
            <person name="Kizaki K."/>
            <person name="Nakano H."/>
            <person name="Nakano H."/>
            <person name="Takahashi T."/>
            <person name="Imai K."/>
            <person name="Hashizume K."/>
        </authorList>
    </citation>
    <scope>NUCLEOTIDE SEQUENCE [MRNA]</scope>
    <scope>TISSUE SPECIFICITY</scope>
    <source>
        <tissue>Placenta</tissue>
    </source>
</reference>
<feature type="signal peptide" evidence="1">
    <location>
        <begin position="1"/>
        <end position="37"/>
    </location>
</feature>
<feature type="chain" id="PRO_0000042256" description="Heparanase 8 kDa subunit" evidence="1">
    <location>
        <begin position="38"/>
        <end position="111"/>
    </location>
</feature>
<feature type="propeptide" id="PRO_0000042257" description="Linker peptide">
    <location>
        <begin position="112"/>
        <end position="159"/>
    </location>
</feature>
<feature type="chain" id="PRO_0000042258" description="Heparanase 50 kDa subunit" evidence="1">
    <location>
        <begin position="160"/>
        <end position="545"/>
    </location>
</feature>
<feature type="region of interest" description="Required for heterodimerization with the heparanase 8 kDa subunit" evidence="2">
    <location>
        <begin position="290"/>
        <end position="419"/>
    </location>
</feature>
<feature type="region of interest" description="Required for transferring proheparanase to the Golgi apparatus, secretion and subsequent enzyme activity and for enhancement of PKB/AKT1 phosphorylation" evidence="2">
    <location>
        <begin position="529"/>
        <end position="545"/>
    </location>
</feature>
<feature type="active site" description="Proton donor" evidence="2">
    <location>
        <position position="227"/>
    </location>
</feature>
<feature type="active site" description="Nucleophile" evidence="2">
    <location>
        <position position="345"/>
    </location>
</feature>
<feature type="binding site" evidence="2">
    <location>
        <begin position="64"/>
        <end position="66"/>
    </location>
    <ligand>
        <name>heparan sulfate group</name>
        <dbReference type="ChEBI" id="CHEBI:157750"/>
    </ligand>
</feature>
<feature type="binding site" evidence="2">
    <location>
        <begin position="160"/>
        <end position="164"/>
    </location>
    <ligand>
        <name>heparan sulfate group</name>
        <dbReference type="ChEBI" id="CHEBI:157750"/>
    </ligand>
</feature>
<feature type="binding site" evidence="2">
    <location>
        <begin position="272"/>
        <end position="282"/>
    </location>
    <ligand>
        <name>heparan sulfate group</name>
        <dbReference type="ChEBI" id="CHEBI:157750"/>
    </ligand>
</feature>
<feature type="binding site" evidence="2">
    <location>
        <position position="298"/>
    </location>
    <ligand>
        <name>heparan sulfate group</name>
        <dbReference type="ChEBI" id="CHEBI:157750"/>
    </ligand>
</feature>
<feature type="binding site" evidence="2">
    <location>
        <position position="305"/>
    </location>
    <ligand>
        <name>heparan sulfate group</name>
        <dbReference type="ChEBI" id="CHEBI:157750"/>
    </ligand>
</feature>
<feature type="binding site" evidence="2">
    <location>
        <begin position="350"/>
        <end position="352"/>
    </location>
    <ligand>
        <name>heparan sulfate group</name>
        <dbReference type="ChEBI" id="CHEBI:157750"/>
    </ligand>
</feature>
<feature type="binding site" evidence="2">
    <location>
        <begin position="391"/>
        <end position="393"/>
    </location>
    <ligand>
        <name>heparan sulfate group</name>
        <dbReference type="ChEBI" id="CHEBI:157750"/>
    </ligand>
</feature>
<feature type="glycosylation site" description="N-linked (GlcNAc...) asparagine" evidence="2">
    <location>
        <position position="164"/>
    </location>
</feature>
<feature type="glycosylation site" description="N-linked (GlcNAc...) asparagine" evidence="2">
    <location>
        <position position="219"/>
    </location>
</feature>
<feature type="glycosylation site" description="N-linked (GlcNAc...) asparagine" evidence="2">
    <location>
        <position position="461"/>
    </location>
</feature>
<feature type="disulfide bond" evidence="2">
    <location>
        <begin position="129"/>
        <end position="181"/>
    </location>
</feature>
<feature type="disulfide bond" evidence="2">
    <location>
        <begin position="439"/>
        <end position="544"/>
    </location>
</feature>
<proteinExistence type="evidence at transcript level"/>
<name>HPSE_BOVIN</name>
<organism>
    <name type="scientific">Bos taurus</name>
    <name type="common">Bovine</name>
    <dbReference type="NCBI Taxonomy" id="9913"/>
    <lineage>
        <taxon>Eukaryota</taxon>
        <taxon>Metazoa</taxon>
        <taxon>Chordata</taxon>
        <taxon>Craniata</taxon>
        <taxon>Vertebrata</taxon>
        <taxon>Euteleostomi</taxon>
        <taxon>Mammalia</taxon>
        <taxon>Eutheria</taxon>
        <taxon>Laurasiatheria</taxon>
        <taxon>Artiodactyla</taxon>
        <taxon>Ruminantia</taxon>
        <taxon>Pecora</taxon>
        <taxon>Bovidae</taxon>
        <taxon>Bovinae</taxon>
        <taxon>Bos</taxon>
    </lineage>
</organism>
<keyword id="KW-0106">Calcium</keyword>
<keyword id="KW-0130">Cell adhesion</keyword>
<keyword id="KW-1015">Disulfide bond</keyword>
<keyword id="KW-0325">Glycoprotein</keyword>
<keyword id="KW-0378">Hydrolase</keyword>
<keyword id="KW-0458">Lysosome</keyword>
<keyword id="KW-0460">Magnesium</keyword>
<keyword id="KW-0472">Membrane</keyword>
<keyword id="KW-0539">Nucleus</keyword>
<keyword id="KW-1185">Reference proteome</keyword>
<keyword id="KW-0964">Secreted</keyword>
<keyword id="KW-0732">Signal</keyword>
<gene>
    <name type="primary">HPSE</name>
</gene>
<evidence type="ECO:0000250" key="1"/>
<evidence type="ECO:0000250" key="2">
    <source>
        <dbReference type="UniProtKB" id="Q9Y251"/>
    </source>
</evidence>
<evidence type="ECO:0000269" key="3">
    <source>
    </source>
</evidence>
<evidence type="ECO:0000305" key="4"/>
<comment type="function">
    <text evidence="1">Endoglycosidase that cleaves heparan sulfate proteoglycans (HSPGs) into heparan sulfate side chains and core proteoglycans. Participates in extracellular matrix (ECM) degradation and remodeling. Selectively cleaves the linkage between a glucuronic acid unit and an N-sulfo glucosamine unit carrying either a 3-O-sulfo or a 6-O-sulfo group. Can also cleave the linkage between a glucuronic acid unit and an N-sulfo glucosamine unit carrying a 2-O-sulfo group, but not linkages between a glucuronic acid unit and a 2-O-sulfated iduronic acid moiety. Essentially inactive at neutral pH but becomes active under acidic conditions such as during tumor invasion and in inflammatory processes. Facilitates cell migration associated with metastasis, wound healing and inflammation. Enhances shedding of syndecans. Acts as a procoagulant by enhancing the generation of activated factor X/F10 in the presence of tissue factor/TF and activated factor VII/F7. Independent of its enzymatic activity, increases cell adhesion to the extracellular matrix (ECM). Enhances AKT1/PKB phosphorylation, possibly via interaction with a lipid raft-resident receptor. Plays a role in the regulation of osteogenesis. Enhances angiogenesis through up-regulation of SRC-mediated activation of VEGF. Implicated in hair follicle inner root sheath differentiation and hair homeostasis (By similarity).</text>
</comment>
<comment type="catalytic activity">
    <reaction>
        <text>endohydrolysis of (1-&gt;4)-beta-D-glycosidic bonds of heparan sulfate chains in heparan sulfate proteoglycan.</text>
        <dbReference type="EC" id="3.2.1.166"/>
    </reaction>
</comment>
<comment type="activity regulation">
    <text evidence="1">Inhibited by laminarin sulfate and, to a lower extent, by heparin, sulfamin and EDTA. Activated by calcium and magnesium (By similarity).</text>
</comment>
<comment type="subunit">
    <text evidence="1">Heterodimer; heterodimer formation between the 8 kDa and the 50 kDa subunits is required for enzyme activity (By similarity). Interacts with TF; the interaction, inhibited by heparin, enhances the generation of activated factor X and activates coagulation. Interacts with HRG; the interaction is enhanced at acidic pH, partially inhibits binding of HPSE to cell surface receptors and modulates its enzymatic activity. Interacts with SDC1; the interaction enhances the shedding of SDC1. Interacts with HPSE2 (By similarity).</text>
</comment>
<comment type="subcellular location">
    <subcellularLocation>
        <location evidence="1">Lysosome membrane</location>
        <topology evidence="1">Peripheral membrane protein</topology>
    </subcellularLocation>
    <subcellularLocation>
        <location evidence="1">Secreted</location>
    </subcellularLocation>
    <subcellularLocation>
        <location evidence="1">Nucleus</location>
    </subcellularLocation>
    <text evidence="1">Proheparanase is secreted via vesicles of the Golgi. Interacts with cell membrane heparan sulfate proteoglycans (HSPGs). Endocytosed and accumulates in endosomes. Transferred to lysosomes where it is proteolytically cleaved to produce the active enzyme. Under certain stimuli, transferred to the cell surface. Associates with lipid rafts. Colocalizes with SDC1 in endosomal/lysosomal vesicles. Accumulates in perinuclear lysosomal vesicles. Heparin retains proheparanase in the extracellular medium (By similarity).</text>
</comment>
<comment type="tissue specificity">
    <text evidence="3">Highly expressed in placenta and weakly in the kidney, lung, spleen and uterus.</text>
</comment>
<comment type="PTM">
    <text evidence="1">Proteolytically processed. The cleavage of the 65 kDa form leads to the generation of a linker peptide, and the 8 kDa and the 50 kDa products. The active form, the 8/50 kDa heterodimer, is resistant to degradation. Complete removal of the linker peptide appears to be a prerequisite to the complete activation of the enzyme (By similarity).</text>
</comment>
<comment type="PTM">
    <text evidence="1">N-glycosylated. Glycosylation of the 50 kDa subunit appears to be essential for its solubility (By similarity).</text>
</comment>
<comment type="similarity">
    <text evidence="4">Belongs to the glycosyl hydrolase 79 family.</text>
</comment>
<protein>
    <recommendedName>
        <fullName>Heparanase</fullName>
        <ecNumber>3.2.1.166</ecNumber>
    </recommendedName>
    <component>
        <recommendedName>
            <fullName>Heparanase 8 kDa subunit</fullName>
        </recommendedName>
    </component>
    <component>
        <recommendedName>
            <fullName>Heparanase 50 kDa subunit</fullName>
        </recommendedName>
    </component>
</protein>
<accession>Q9MYY0</accession>